<protein>
    <recommendedName>
        <fullName evidence="1">Uroporphyrinogen decarboxylase</fullName>
        <shortName evidence="1">UPD</shortName>
        <shortName evidence="1">URO-D</shortName>
        <ecNumber evidence="1">4.1.1.37</ecNumber>
    </recommendedName>
</protein>
<evidence type="ECO:0000255" key="1">
    <source>
        <dbReference type="HAMAP-Rule" id="MF_00218"/>
    </source>
</evidence>
<reference key="1">
    <citation type="submission" date="2006-11" db="EMBL/GenBank/DDBJ databases">
        <title>Identification and characterization of a new conjugation/ type IVA secretion system (trb/tra) of L. pneumophila Corby localized on a mobile genomic island.</title>
        <authorList>
            <person name="Gloeckner G."/>
            <person name="Albert-Weissenberger C."/>
            <person name="Weinmann E."/>
            <person name="Jacobi S."/>
            <person name="Schunder E."/>
            <person name="Steinert M."/>
            <person name="Buchrieser C."/>
            <person name="Hacker J."/>
            <person name="Heuner K."/>
        </authorList>
    </citation>
    <scope>NUCLEOTIDE SEQUENCE [LARGE SCALE GENOMIC DNA]</scope>
    <source>
        <strain>Corby</strain>
    </source>
</reference>
<name>DCUP_LEGPC</name>
<organism>
    <name type="scientific">Legionella pneumophila (strain Corby)</name>
    <dbReference type="NCBI Taxonomy" id="400673"/>
    <lineage>
        <taxon>Bacteria</taxon>
        <taxon>Pseudomonadati</taxon>
        <taxon>Pseudomonadota</taxon>
        <taxon>Gammaproteobacteria</taxon>
        <taxon>Legionellales</taxon>
        <taxon>Legionellaceae</taxon>
        <taxon>Legionella</taxon>
    </lineage>
</organism>
<accession>A5IDL1</accession>
<feature type="chain" id="PRO_1000058642" description="Uroporphyrinogen decarboxylase">
    <location>
        <begin position="1"/>
        <end position="352"/>
    </location>
</feature>
<feature type="binding site" evidence="1">
    <location>
        <begin position="27"/>
        <end position="31"/>
    </location>
    <ligand>
        <name>substrate</name>
    </ligand>
</feature>
<feature type="binding site" evidence="1">
    <location>
        <position position="77"/>
    </location>
    <ligand>
        <name>substrate</name>
    </ligand>
</feature>
<feature type="binding site" evidence="1">
    <location>
        <position position="154"/>
    </location>
    <ligand>
        <name>substrate</name>
    </ligand>
</feature>
<feature type="binding site" evidence="1">
    <location>
        <position position="209"/>
    </location>
    <ligand>
        <name>substrate</name>
    </ligand>
</feature>
<feature type="binding site" evidence="1">
    <location>
        <position position="325"/>
    </location>
    <ligand>
        <name>substrate</name>
    </ligand>
</feature>
<feature type="site" description="Transition state stabilizer" evidence="1">
    <location>
        <position position="77"/>
    </location>
</feature>
<sequence length="352" mass="39399">MFDLNQSLFLRALRRQPVERTPIWIMRQAGRYLPEYRKVREHAGDFLNLCKNPELACEVTLQPLRRYALDAAILFSDILTIPDAMGLGLYFAEGEGPCFTNPLQDTKAIHTLKIPSIPESLSYVFDAARLIRQEMPKELPLIGFSGSPWTLACYMVEGGSSRDFKRILNLIYTEKEAAHLLLNKLAVSVTAYLIEQIKAGVNAVMIFDTWGGVLTPQNYKDFSLAYMHQIVQQLKKEYPDIPVILFTKNGGQWLEWMAETGCDALGVDWTCDLASARKRVGGKVALQGNLDPAVLLTTKNCIRREVGSVLASYGYGTGHIFNLGHGITPDVPPENVAIMIEAVHEISPQYHL</sequence>
<dbReference type="EC" id="4.1.1.37" evidence="1"/>
<dbReference type="EMBL" id="CP000675">
    <property type="protein sequence ID" value="ABQ55461.1"/>
    <property type="molecule type" value="Genomic_DNA"/>
</dbReference>
<dbReference type="RefSeq" id="WP_011946927.1">
    <property type="nucleotide sequence ID" value="NZ_JAPMSS010000011.1"/>
</dbReference>
<dbReference type="SMR" id="A5IDL1"/>
<dbReference type="KEGG" id="lpc:LPC_1512"/>
<dbReference type="HOGENOM" id="CLU_040933_0_0_6"/>
<dbReference type="UniPathway" id="UPA00251">
    <property type="reaction ID" value="UER00321"/>
</dbReference>
<dbReference type="GO" id="GO:0005829">
    <property type="term" value="C:cytosol"/>
    <property type="evidence" value="ECO:0007669"/>
    <property type="project" value="TreeGrafter"/>
</dbReference>
<dbReference type="GO" id="GO:0004853">
    <property type="term" value="F:uroporphyrinogen decarboxylase activity"/>
    <property type="evidence" value="ECO:0007669"/>
    <property type="project" value="UniProtKB-UniRule"/>
</dbReference>
<dbReference type="GO" id="GO:0019353">
    <property type="term" value="P:protoporphyrinogen IX biosynthetic process from glutamate"/>
    <property type="evidence" value="ECO:0007669"/>
    <property type="project" value="TreeGrafter"/>
</dbReference>
<dbReference type="CDD" id="cd00717">
    <property type="entry name" value="URO-D"/>
    <property type="match status" value="1"/>
</dbReference>
<dbReference type="FunFam" id="3.20.20.210:FF:000001">
    <property type="entry name" value="Uroporphyrinogen decarboxylase"/>
    <property type="match status" value="1"/>
</dbReference>
<dbReference type="Gene3D" id="3.20.20.210">
    <property type="match status" value="1"/>
</dbReference>
<dbReference type="HAMAP" id="MF_00218">
    <property type="entry name" value="URO_D"/>
    <property type="match status" value="1"/>
</dbReference>
<dbReference type="InterPro" id="IPR038071">
    <property type="entry name" value="UROD/MetE-like_sf"/>
</dbReference>
<dbReference type="InterPro" id="IPR006361">
    <property type="entry name" value="Uroporphyrinogen_deCO2ase_HemE"/>
</dbReference>
<dbReference type="InterPro" id="IPR000257">
    <property type="entry name" value="Uroporphyrinogen_deCOase"/>
</dbReference>
<dbReference type="NCBIfam" id="TIGR01464">
    <property type="entry name" value="hemE"/>
    <property type="match status" value="1"/>
</dbReference>
<dbReference type="PANTHER" id="PTHR21091">
    <property type="entry name" value="METHYLTETRAHYDROFOLATE:HOMOCYSTEINE METHYLTRANSFERASE RELATED"/>
    <property type="match status" value="1"/>
</dbReference>
<dbReference type="PANTHER" id="PTHR21091:SF169">
    <property type="entry name" value="UROPORPHYRINOGEN DECARBOXYLASE"/>
    <property type="match status" value="1"/>
</dbReference>
<dbReference type="Pfam" id="PF01208">
    <property type="entry name" value="URO-D"/>
    <property type="match status" value="1"/>
</dbReference>
<dbReference type="SUPFAM" id="SSF51726">
    <property type="entry name" value="UROD/MetE-like"/>
    <property type="match status" value="1"/>
</dbReference>
<dbReference type="PROSITE" id="PS00906">
    <property type="entry name" value="UROD_1"/>
    <property type="match status" value="1"/>
</dbReference>
<dbReference type="PROSITE" id="PS00907">
    <property type="entry name" value="UROD_2"/>
    <property type="match status" value="1"/>
</dbReference>
<comment type="function">
    <text evidence="1">Catalyzes the decarboxylation of four acetate groups of uroporphyrinogen-III to yield coproporphyrinogen-III.</text>
</comment>
<comment type="catalytic activity">
    <reaction evidence="1">
        <text>uroporphyrinogen III + 4 H(+) = coproporphyrinogen III + 4 CO2</text>
        <dbReference type="Rhea" id="RHEA:19865"/>
        <dbReference type="ChEBI" id="CHEBI:15378"/>
        <dbReference type="ChEBI" id="CHEBI:16526"/>
        <dbReference type="ChEBI" id="CHEBI:57308"/>
        <dbReference type="ChEBI" id="CHEBI:57309"/>
        <dbReference type="EC" id="4.1.1.37"/>
    </reaction>
</comment>
<comment type="pathway">
    <text evidence="1">Porphyrin-containing compound metabolism; protoporphyrin-IX biosynthesis; coproporphyrinogen-III from 5-aminolevulinate: step 4/4.</text>
</comment>
<comment type="subunit">
    <text evidence="1">Homodimer.</text>
</comment>
<comment type="subcellular location">
    <subcellularLocation>
        <location evidence="1">Cytoplasm</location>
    </subcellularLocation>
</comment>
<comment type="similarity">
    <text evidence="1">Belongs to the uroporphyrinogen decarboxylase family.</text>
</comment>
<proteinExistence type="inferred from homology"/>
<keyword id="KW-0963">Cytoplasm</keyword>
<keyword id="KW-0210">Decarboxylase</keyword>
<keyword id="KW-0456">Lyase</keyword>
<keyword id="KW-0627">Porphyrin biosynthesis</keyword>
<gene>
    <name evidence="1" type="primary">hemE</name>
    <name type="ordered locus">LPC_1512</name>
</gene>